<name>NDB2S_OPICA</name>
<sequence>GKVWDWIKSTAKKLWNSEPVKELKNTALNAAKNFVAEKIGATPS</sequence>
<protein>
    <recommendedName>
        <fullName evidence="3">Opistoporin-2</fullName>
        <shortName evidence="3">OP2</shortName>
    </recommendedName>
    <alternativeName>
        <fullName evidence="4">Non-disulfide-bridged peptide 3.6</fullName>
        <shortName evidence="4">NDBP-3.6</shortName>
    </alternativeName>
</protein>
<keyword id="KW-0044">Antibiotic</keyword>
<keyword id="KW-0929">Antimicrobial</keyword>
<keyword id="KW-0204">Cytolysis</keyword>
<keyword id="KW-0903">Direct protein sequencing</keyword>
<keyword id="KW-0295">Fungicide</keyword>
<keyword id="KW-0354">Hemolysis</keyword>
<keyword id="KW-0406">Ion transport</keyword>
<keyword id="KW-0472">Membrane</keyword>
<keyword id="KW-0964">Secreted</keyword>
<keyword id="KW-1052">Target cell membrane</keyword>
<keyword id="KW-1053">Target membrane</keyword>
<keyword id="KW-0812">Transmembrane</keyword>
<keyword id="KW-0813">Transport</keyword>
<evidence type="ECO:0000250" key="1"/>
<evidence type="ECO:0000269" key="2">
    <source>
    </source>
</evidence>
<evidence type="ECO:0000303" key="3">
    <source>
    </source>
</evidence>
<evidence type="ECO:0000303" key="4">
    <source>
    </source>
</evidence>
<evidence type="ECO:0000305" key="5"/>
<comment type="function">
    <text evidence="1">At high concentrations, acts as a pore former in cellular membranes and causes the leakage of the cells. At submicromolar concentrations, degranulates granulocytes and has a weak hemolytic activity against human erythrocytes. Also strongly inhibits the production of superoxide anions. Has a strong antibacterial activity against Gram-negative bacteria but is less active against Gram-positive bacteria. Also has antifungal activity.</text>
</comment>
<comment type="subcellular location">
    <subcellularLocation>
        <location evidence="2">Secreted</location>
    </subcellularLocation>
    <subcellularLocation>
        <location evidence="2">Target cell membrane</location>
    </subcellularLocation>
    <text>Forms a helical membrane channel in the prey.</text>
</comment>
<comment type="tissue specificity">
    <text evidence="5">Expressed by the venom gland.</text>
</comment>
<comment type="mass spectrometry"/>
<comment type="similarity">
    <text evidence="5">Belongs to the non-disulfide-bridged peptide (NDBP) superfamily. Long chain multifunctional peptide (group 2) family.</text>
</comment>
<reference key="1">
    <citation type="journal article" date="2002" name="Eur. J. Biochem.">
        <title>Antibacterial and antifungal properties of alpha-helical, cationic peptides in the venom of scorpions from southern Africa.</title>
        <authorList>
            <person name="Moerman L.F.A."/>
            <person name="Bosteels S."/>
            <person name="Noppe W."/>
            <person name="Willems J."/>
            <person name="Clynen E."/>
            <person name="Schoofs L."/>
            <person name="Thevissen K."/>
            <person name="Tytgat J."/>
            <person name="Van Eldere J."/>
            <person name="van der Walt J."/>
            <person name="Verdonck F."/>
        </authorList>
    </citation>
    <scope>PROTEIN SEQUENCE</scope>
    <scope>SUBCELLULAR LOCATION</scope>
    <scope>MASS SPECTROMETRY</scope>
    <source>
        <tissue>Venom</tissue>
    </source>
</reference>
<reference key="2">
    <citation type="journal article" date="2005" name="IUBMB Life">
        <title>Scorpion venom peptides without disulfide bridges.</title>
        <authorList>
            <person name="Zeng X.C."/>
            <person name="Corzo G."/>
            <person name="Hahin R."/>
        </authorList>
    </citation>
    <scope>NOMENCLATURE</scope>
</reference>
<feature type="chain" id="PRO_0000152880" description="Opistoporin-2">
    <location>
        <begin position="1"/>
        <end position="44"/>
    </location>
</feature>
<proteinExistence type="evidence at protein level"/>
<accession>P83314</accession>
<dbReference type="SMR" id="P83314"/>
<dbReference type="GO" id="GO:0005576">
    <property type="term" value="C:extracellular region"/>
    <property type="evidence" value="ECO:0007669"/>
    <property type="project" value="UniProtKB-SubCell"/>
</dbReference>
<dbReference type="GO" id="GO:0016020">
    <property type="term" value="C:membrane"/>
    <property type="evidence" value="ECO:0007669"/>
    <property type="project" value="UniProtKB-KW"/>
</dbReference>
<dbReference type="GO" id="GO:0044218">
    <property type="term" value="C:other organism cell membrane"/>
    <property type="evidence" value="ECO:0007669"/>
    <property type="project" value="UniProtKB-KW"/>
</dbReference>
<dbReference type="GO" id="GO:0042742">
    <property type="term" value="P:defense response to bacterium"/>
    <property type="evidence" value="ECO:0007669"/>
    <property type="project" value="UniProtKB-KW"/>
</dbReference>
<dbReference type="GO" id="GO:0050832">
    <property type="term" value="P:defense response to fungus"/>
    <property type="evidence" value="ECO:0007669"/>
    <property type="project" value="UniProtKB-KW"/>
</dbReference>
<dbReference type="GO" id="GO:0044179">
    <property type="term" value="P:hemolysis in another organism"/>
    <property type="evidence" value="ECO:0007669"/>
    <property type="project" value="InterPro"/>
</dbReference>
<dbReference type="GO" id="GO:0006811">
    <property type="term" value="P:monoatomic ion transport"/>
    <property type="evidence" value="ECO:0007669"/>
    <property type="project" value="UniProtKB-KW"/>
</dbReference>
<dbReference type="InterPro" id="IPR012526">
    <property type="entry name" value="Antimicrobial_7"/>
</dbReference>
<dbReference type="Pfam" id="PF08102">
    <property type="entry name" value="Antimicrobial_7"/>
    <property type="match status" value="1"/>
</dbReference>
<organism>
    <name type="scientific">Opistophthalmus carinatus</name>
    <name type="common">African yellow leg scorpion</name>
    <dbReference type="NCBI Taxonomy" id="190115"/>
    <lineage>
        <taxon>Eukaryota</taxon>
        <taxon>Metazoa</taxon>
        <taxon>Ecdysozoa</taxon>
        <taxon>Arthropoda</taxon>
        <taxon>Chelicerata</taxon>
        <taxon>Arachnida</taxon>
        <taxon>Scorpiones</taxon>
        <taxon>Iurida</taxon>
        <taxon>Scorpionoidea</taxon>
        <taxon>Scorpionidae</taxon>
        <taxon>Opistophthalminae</taxon>
        <taxon>Opistophthalmus</taxon>
    </lineage>
</organism>